<gene>
    <name evidence="1" type="primary">glnA</name>
    <name type="ordered locus">HP_0512</name>
</gene>
<proteinExistence type="evidence at protein level"/>
<sequence>MIVRTQNSESKIKEFFEFCKENEVEFVDFRFSDIKGTWNHIAYSFGALTHGMLKEGIPFDASCFKGWQGIEHSDMILTPDLVRYFIDPFSADVSVVVFCDVYDVYKNQPYEKCPRSIAKKALQHLKDSGLGDVAYFGAENEFFIFDSIKIKDASNSQYYEVDSEEGEWNRDRSFENGVNFGHRPGKQGGYMPVPPTDTMMDIRTEIVKVLNQVGLETFVVHHEVAQAQGEVGVKFGDLVEAADNVQKLKYVVKMVAHLNGKTATFMPKPLYGDNGSGMHTHVSVWKNNENLFSGETYKGLSEFALHFLGGVLRHARGLAAFTNASTNSYKRLIPGYEAPSILTYSANNRSASVRIPYGISKNSARFEFRFPDSSSNPYLAFAAILMAGMDGVKNKIDPGEAMDINLFKLTLDEIREKGIKQMPHTLRRSLEEMLADKQYLKESQVFSEEFIQAYQSLKFNAEVFPWESKPHPFEFITTYSC</sequence>
<accession>P94845</accession>
<organism>
    <name type="scientific">Helicobacter pylori (strain ATCC 700392 / 26695)</name>
    <name type="common">Campylobacter pylori</name>
    <dbReference type="NCBI Taxonomy" id="85962"/>
    <lineage>
        <taxon>Bacteria</taxon>
        <taxon>Pseudomonadati</taxon>
        <taxon>Campylobacterota</taxon>
        <taxon>Epsilonproteobacteria</taxon>
        <taxon>Campylobacterales</taxon>
        <taxon>Helicobacteraceae</taxon>
        <taxon>Helicobacter</taxon>
    </lineage>
</organism>
<dbReference type="EC" id="6.3.1.2" evidence="1"/>
<dbReference type="EMBL" id="AE000511">
    <property type="protein sequence ID" value="AAD07575.1"/>
    <property type="molecule type" value="Genomic_DNA"/>
</dbReference>
<dbReference type="EMBL" id="U75328">
    <property type="protein sequence ID" value="AAB39719.1"/>
    <property type="molecule type" value="Genomic_DNA"/>
</dbReference>
<dbReference type="PIR" id="H64583">
    <property type="entry name" value="H64583"/>
</dbReference>
<dbReference type="RefSeq" id="NP_207309.1">
    <property type="nucleotide sequence ID" value="NC_000915.1"/>
</dbReference>
<dbReference type="RefSeq" id="WP_000637150.1">
    <property type="nucleotide sequence ID" value="NC_018939.1"/>
</dbReference>
<dbReference type="PDB" id="5ZLI">
    <property type="method" value="X-ray"/>
    <property type="resolution" value="2.80 A"/>
    <property type="chains" value="A/B/C/D/E/F=1-481"/>
</dbReference>
<dbReference type="PDB" id="5ZLP">
    <property type="method" value="X-ray"/>
    <property type="resolution" value="2.93 A"/>
    <property type="chains" value="A/B/C/D/E/F/G/H/I/J/K/L=1-481"/>
</dbReference>
<dbReference type="PDBsum" id="5ZLI"/>
<dbReference type="PDBsum" id="5ZLP"/>
<dbReference type="SMR" id="P94845"/>
<dbReference type="DIP" id="DIP-3543N"/>
<dbReference type="FunCoup" id="P94845">
    <property type="interactions" value="361"/>
</dbReference>
<dbReference type="IntAct" id="P94845">
    <property type="interactions" value="15"/>
</dbReference>
<dbReference type="MINT" id="P94845"/>
<dbReference type="STRING" id="85962.HP_0512"/>
<dbReference type="PaxDb" id="85962-C694_02630"/>
<dbReference type="EnsemblBacteria" id="AAD07575">
    <property type="protein sequence ID" value="AAD07575"/>
    <property type="gene ID" value="HP_0512"/>
</dbReference>
<dbReference type="KEGG" id="heo:C694_02630"/>
<dbReference type="KEGG" id="hpy:HP_0512"/>
<dbReference type="PATRIC" id="fig|85962.47.peg.550"/>
<dbReference type="eggNOG" id="COG0174">
    <property type="taxonomic scope" value="Bacteria"/>
</dbReference>
<dbReference type="InParanoid" id="P94845"/>
<dbReference type="OrthoDB" id="9807095at2"/>
<dbReference type="PhylomeDB" id="P94845"/>
<dbReference type="Proteomes" id="UP000000429">
    <property type="component" value="Chromosome"/>
</dbReference>
<dbReference type="GO" id="GO:0005737">
    <property type="term" value="C:cytoplasm"/>
    <property type="evidence" value="ECO:0000318"/>
    <property type="project" value="GO_Central"/>
</dbReference>
<dbReference type="GO" id="GO:0016020">
    <property type="term" value="C:membrane"/>
    <property type="evidence" value="ECO:0000318"/>
    <property type="project" value="GO_Central"/>
</dbReference>
<dbReference type="GO" id="GO:0005524">
    <property type="term" value="F:ATP binding"/>
    <property type="evidence" value="ECO:0007669"/>
    <property type="project" value="UniProtKB-KW"/>
</dbReference>
<dbReference type="GO" id="GO:0004356">
    <property type="term" value="F:glutamine synthetase activity"/>
    <property type="evidence" value="ECO:0000318"/>
    <property type="project" value="GO_Central"/>
</dbReference>
<dbReference type="GO" id="GO:0046872">
    <property type="term" value="F:metal ion binding"/>
    <property type="evidence" value="ECO:0007669"/>
    <property type="project" value="UniProtKB-KW"/>
</dbReference>
<dbReference type="GO" id="GO:0006542">
    <property type="term" value="P:glutamine biosynthetic process"/>
    <property type="evidence" value="ECO:0000318"/>
    <property type="project" value="GO_Central"/>
</dbReference>
<dbReference type="GO" id="GO:0019740">
    <property type="term" value="P:nitrogen utilization"/>
    <property type="evidence" value="ECO:0000318"/>
    <property type="project" value="GO_Central"/>
</dbReference>
<dbReference type="FunFam" id="3.30.590.10:FF:000001">
    <property type="entry name" value="Glutamine synthetase"/>
    <property type="match status" value="1"/>
</dbReference>
<dbReference type="FunFam" id="3.10.20.70:FF:000012">
    <property type="entry name" value="Glutamine synthetase, type I"/>
    <property type="match status" value="1"/>
</dbReference>
<dbReference type="Gene3D" id="3.10.20.70">
    <property type="entry name" value="Glutamine synthetase, N-terminal domain"/>
    <property type="match status" value="1"/>
</dbReference>
<dbReference type="Gene3D" id="3.30.590.10">
    <property type="entry name" value="Glutamine synthetase/guanido kinase, catalytic domain"/>
    <property type="match status" value="1"/>
</dbReference>
<dbReference type="InterPro" id="IPR008147">
    <property type="entry name" value="Gln_synt_N"/>
</dbReference>
<dbReference type="InterPro" id="IPR036651">
    <property type="entry name" value="Gln_synt_N_sf"/>
</dbReference>
<dbReference type="InterPro" id="IPR014746">
    <property type="entry name" value="Gln_synth/guanido_kin_cat_dom"/>
</dbReference>
<dbReference type="InterPro" id="IPR008146">
    <property type="entry name" value="Gln_synth_cat_dom"/>
</dbReference>
<dbReference type="InterPro" id="IPR027303">
    <property type="entry name" value="Gln_synth_gly_rich_site"/>
</dbReference>
<dbReference type="InterPro" id="IPR004809">
    <property type="entry name" value="Gln_synth_I"/>
</dbReference>
<dbReference type="NCBIfam" id="TIGR00653">
    <property type="entry name" value="GlnA"/>
    <property type="match status" value="1"/>
</dbReference>
<dbReference type="PANTHER" id="PTHR43407">
    <property type="entry name" value="GLUTAMINE SYNTHETASE"/>
    <property type="match status" value="1"/>
</dbReference>
<dbReference type="PANTHER" id="PTHR43407:SF1">
    <property type="entry name" value="LENGSIN"/>
    <property type="match status" value="1"/>
</dbReference>
<dbReference type="Pfam" id="PF00120">
    <property type="entry name" value="Gln-synt_C"/>
    <property type="match status" value="1"/>
</dbReference>
<dbReference type="Pfam" id="PF03951">
    <property type="entry name" value="Gln-synt_N"/>
    <property type="match status" value="1"/>
</dbReference>
<dbReference type="SMART" id="SM01230">
    <property type="entry name" value="Gln-synt_C"/>
    <property type="match status" value="1"/>
</dbReference>
<dbReference type="SUPFAM" id="SSF54368">
    <property type="entry name" value="Glutamine synthetase, N-terminal domain"/>
    <property type="match status" value="1"/>
</dbReference>
<dbReference type="SUPFAM" id="SSF55931">
    <property type="entry name" value="Glutamine synthetase/guanido kinase"/>
    <property type="match status" value="1"/>
</dbReference>
<dbReference type="PROSITE" id="PS00181">
    <property type="entry name" value="GLNA_ATP"/>
    <property type="match status" value="1"/>
</dbReference>
<dbReference type="PROSITE" id="PS51986">
    <property type="entry name" value="GS_BETA_GRASP"/>
    <property type="match status" value="1"/>
</dbReference>
<dbReference type="PROSITE" id="PS51987">
    <property type="entry name" value="GS_CATALYTIC"/>
    <property type="match status" value="1"/>
</dbReference>
<feature type="chain" id="PRO_0000153239" description="Glutamine synthetase">
    <location>
        <begin position="1"/>
        <end position="481"/>
    </location>
</feature>
<feature type="domain" description="GS beta-grasp" evidence="6">
    <location>
        <begin position="22"/>
        <end position="106"/>
    </location>
</feature>
<feature type="domain" description="GS catalytic" evidence="7">
    <location>
        <begin position="114"/>
        <end position="481"/>
    </location>
</feature>
<feature type="binding site" evidence="4">
    <location>
        <position position="139"/>
    </location>
    <ligand>
        <name>Mg(2+)</name>
        <dbReference type="ChEBI" id="CHEBI:18420"/>
        <label>1</label>
    </ligand>
</feature>
<feature type="binding site" evidence="4">
    <location>
        <position position="141"/>
    </location>
    <ligand>
        <name>Mg(2+)</name>
        <dbReference type="ChEBI" id="CHEBI:18420"/>
        <label>2</label>
    </ligand>
</feature>
<feature type="binding site" evidence="4">
    <location>
        <position position="223"/>
    </location>
    <ligand>
        <name>Mg(2+)</name>
        <dbReference type="ChEBI" id="CHEBI:18420"/>
        <label>2</label>
    </ligand>
</feature>
<feature type="binding site" evidence="4">
    <location>
        <position position="230"/>
    </location>
    <ligand>
        <name>Mg(2+)</name>
        <dbReference type="ChEBI" id="CHEBI:18420"/>
        <label>2</label>
    </ligand>
</feature>
<feature type="binding site" evidence="1">
    <location>
        <begin position="274"/>
        <end position="275"/>
    </location>
    <ligand>
        <name>L-glutamate</name>
        <dbReference type="ChEBI" id="CHEBI:29985"/>
    </ligand>
</feature>
<feature type="binding site" evidence="2">
    <location>
        <position position="275"/>
    </location>
    <ligand>
        <name>L-glutamate</name>
        <dbReference type="ChEBI" id="CHEBI:29985"/>
    </ligand>
</feature>
<feature type="binding site" evidence="4">
    <location>
        <position position="279"/>
    </location>
    <ligand>
        <name>Mg(2+)</name>
        <dbReference type="ChEBI" id="CHEBI:18420"/>
        <label>1</label>
    </ligand>
</feature>
<feature type="binding site" evidence="1">
    <location>
        <begin position="281"/>
        <end position="283"/>
    </location>
    <ligand>
        <name>ATP</name>
        <dbReference type="ChEBI" id="CHEBI:30616"/>
    </ligand>
</feature>
<feature type="binding site" evidence="3">
    <location>
        <position position="283"/>
    </location>
    <ligand>
        <name>ATP</name>
        <dbReference type="ChEBI" id="CHEBI:30616"/>
    </ligand>
</feature>
<feature type="binding site" evidence="1">
    <location>
        <position position="331"/>
    </location>
    <ligand>
        <name>L-glutamate</name>
        <dbReference type="ChEBI" id="CHEBI:29985"/>
    </ligand>
</feature>
<feature type="binding site" evidence="1">
    <location>
        <position position="337"/>
    </location>
    <ligand>
        <name>L-glutamate</name>
        <dbReference type="ChEBI" id="CHEBI:29985"/>
    </ligand>
</feature>
<feature type="binding site" evidence="4">
    <location>
        <position position="349"/>
    </location>
    <ligand>
        <name>ATP</name>
        <dbReference type="ChEBI" id="CHEBI:30616"/>
    </ligand>
</feature>
<feature type="binding site" evidence="4">
    <location>
        <position position="349"/>
    </location>
    <ligand>
        <name>L-glutamate</name>
        <dbReference type="ChEBI" id="CHEBI:29985"/>
    </ligand>
</feature>
<feature type="binding site" evidence="4">
    <location>
        <position position="354"/>
    </location>
    <ligand>
        <name>ATP</name>
        <dbReference type="ChEBI" id="CHEBI:30616"/>
    </ligand>
</feature>
<feature type="binding site" evidence="4">
    <location>
        <position position="367"/>
    </location>
    <ligand>
        <name>Mg(2+)</name>
        <dbReference type="ChEBI" id="CHEBI:18420"/>
        <label>1</label>
    </ligand>
</feature>
<feature type="binding site" evidence="1">
    <location>
        <position position="369"/>
    </location>
    <ligand>
        <name>L-glutamate</name>
        <dbReference type="ChEBI" id="CHEBI:29985"/>
    </ligand>
</feature>
<feature type="sequence conflict" description="In Ref. 2; AAB39719." evidence="8" ref="2">
    <original>I</original>
    <variation>M</variation>
    <location>
        <position position="396"/>
    </location>
</feature>
<feature type="sequence conflict" description="In Ref. 2; AAB39719." evidence="8" ref="2">
    <original>S</original>
    <variation>G</variation>
    <location>
        <position position="443"/>
    </location>
</feature>
<feature type="helix" evidence="9">
    <location>
        <begin position="9"/>
        <end position="21"/>
    </location>
</feature>
<feature type="strand" evidence="9">
    <location>
        <begin position="26"/>
        <end position="32"/>
    </location>
</feature>
<feature type="strand" evidence="9">
    <location>
        <begin position="38"/>
        <end position="44"/>
    </location>
</feature>
<feature type="helix" evidence="9">
    <location>
        <begin position="45"/>
        <end position="47"/>
    </location>
</feature>
<feature type="helix" evidence="9">
    <location>
        <begin position="51"/>
        <end position="55"/>
    </location>
</feature>
<feature type="strand" evidence="9">
    <location>
        <begin position="57"/>
        <end position="60"/>
    </location>
</feature>
<feature type="helix" evidence="9">
    <location>
        <begin position="70"/>
        <end position="72"/>
    </location>
</feature>
<feature type="strand" evidence="9">
    <location>
        <begin position="74"/>
        <end position="79"/>
    </location>
</feature>
<feature type="strand" evidence="9">
    <location>
        <begin position="94"/>
        <end position="103"/>
    </location>
</feature>
<feature type="turn" evidence="9">
    <location>
        <begin position="104"/>
        <end position="107"/>
    </location>
</feature>
<feature type="helix" evidence="9">
    <location>
        <begin position="114"/>
        <end position="128"/>
    </location>
</feature>
<feature type="strand" evidence="9">
    <location>
        <begin position="132"/>
        <end position="140"/>
    </location>
</feature>
<feature type="strand" evidence="9">
    <location>
        <begin position="142"/>
        <end position="153"/>
    </location>
</feature>
<feature type="strand" evidence="9">
    <location>
        <begin position="156"/>
        <end position="162"/>
    </location>
</feature>
<feature type="helix" evidence="9">
    <location>
        <begin position="167"/>
        <end position="169"/>
    </location>
</feature>
<feature type="strand" evidence="9">
    <location>
        <begin position="175"/>
        <end position="177"/>
    </location>
</feature>
<feature type="strand" evidence="9">
    <location>
        <begin position="190"/>
        <end position="192"/>
    </location>
</feature>
<feature type="turn" evidence="9">
    <location>
        <begin position="194"/>
        <end position="196"/>
    </location>
</feature>
<feature type="helix" evidence="9">
    <location>
        <begin position="200"/>
        <end position="212"/>
    </location>
</feature>
<feature type="strand" evidence="9">
    <location>
        <begin position="217"/>
        <end position="222"/>
    </location>
</feature>
<feature type="strand" evidence="9">
    <location>
        <begin position="228"/>
        <end position="233"/>
    </location>
</feature>
<feature type="helix" evidence="9">
    <location>
        <begin position="238"/>
        <end position="258"/>
    </location>
</feature>
<feature type="strand" evidence="9">
    <location>
        <begin position="262"/>
        <end position="264"/>
    </location>
</feature>
<feature type="strand" evidence="9">
    <location>
        <begin position="278"/>
        <end position="286"/>
    </location>
</feature>
<feature type="strand" evidence="9">
    <location>
        <begin position="295"/>
        <end position="297"/>
    </location>
</feature>
<feature type="helix" evidence="9">
    <location>
        <begin position="302"/>
        <end position="313"/>
    </location>
</feature>
<feature type="helix" evidence="9">
    <location>
        <begin position="315"/>
        <end position="322"/>
    </location>
</feature>
<feature type="helix" evidence="9">
    <location>
        <begin position="326"/>
        <end position="331"/>
    </location>
</feature>
<feature type="strand" evidence="9">
    <location>
        <begin position="344"/>
        <end position="346"/>
    </location>
</feature>
<feature type="strand" evidence="9">
    <location>
        <begin position="349"/>
        <end position="355"/>
    </location>
</feature>
<feature type="turn" evidence="9">
    <location>
        <begin position="361"/>
        <end position="363"/>
    </location>
</feature>
<feature type="strand" evidence="9">
    <location>
        <begin position="366"/>
        <end position="368"/>
    </location>
</feature>
<feature type="strand" evidence="10">
    <location>
        <begin position="373"/>
        <end position="375"/>
    </location>
</feature>
<feature type="helix" evidence="9">
    <location>
        <begin position="377"/>
        <end position="393"/>
    </location>
</feature>
<feature type="strand" evidence="9">
    <location>
        <begin position="406"/>
        <end position="409"/>
    </location>
</feature>
<feature type="helix" evidence="9">
    <location>
        <begin position="411"/>
        <end position="416"/>
    </location>
</feature>
<feature type="helix" evidence="9">
    <location>
        <begin position="426"/>
        <end position="434"/>
    </location>
</feature>
<feature type="helix" evidence="9">
    <location>
        <begin position="438"/>
        <end position="441"/>
    </location>
</feature>
<feature type="helix" evidence="9">
    <location>
        <begin position="442"/>
        <end position="444"/>
    </location>
</feature>
<feature type="helix" evidence="9">
    <location>
        <begin position="448"/>
        <end position="461"/>
    </location>
</feature>
<feature type="helix" evidence="9">
    <location>
        <begin position="463"/>
        <end position="466"/>
    </location>
</feature>
<feature type="helix" evidence="9">
    <location>
        <begin position="472"/>
        <end position="477"/>
    </location>
</feature>
<feature type="turn" evidence="9">
    <location>
        <begin position="478"/>
        <end position="480"/>
    </location>
</feature>
<name>GLN1B_HELPY</name>
<keyword id="KW-0002">3D-structure</keyword>
<keyword id="KW-0067">ATP-binding</keyword>
<keyword id="KW-0963">Cytoplasm</keyword>
<keyword id="KW-0436">Ligase</keyword>
<keyword id="KW-0460">Magnesium</keyword>
<keyword id="KW-0479">Metal-binding</keyword>
<keyword id="KW-0547">Nucleotide-binding</keyword>
<keyword id="KW-1185">Reference proteome</keyword>
<protein>
    <recommendedName>
        <fullName evidence="1">Glutamine synthetase</fullName>
        <shortName evidence="1">GS</shortName>
        <ecNumber evidence="1">6.3.1.2</ecNumber>
    </recommendedName>
    <alternativeName>
        <fullName evidence="8">Glutamate--ammonia ligase</fullName>
    </alternativeName>
    <alternativeName>
        <fullName evidence="1">Glutamine synthetase I beta</fullName>
        <shortName evidence="1">GSI beta</shortName>
    </alternativeName>
</protein>
<comment type="function">
    <text evidence="1">Catalyzes the ATP-dependent biosynthesis of glutamine from glutamate and ammonia.</text>
</comment>
<comment type="catalytic activity">
    <reaction evidence="1">
        <text>L-glutamate + NH4(+) + ATP = L-glutamine + ADP + phosphate + H(+)</text>
        <dbReference type="Rhea" id="RHEA:16169"/>
        <dbReference type="ChEBI" id="CHEBI:15378"/>
        <dbReference type="ChEBI" id="CHEBI:28938"/>
        <dbReference type="ChEBI" id="CHEBI:29985"/>
        <dbReference type="ChEBI" id="CHEBI:30616"/>
        <dbReference type="ChEBI" id="CHEBI:43474"/>
        <dbReference type="ChEBI" id="CHEBI:58359"/>
        <dbReference type="ChEBI" id="CHEBI:456216"/>
        <dbReference type="EC" id="6.3.1.2"/>
    </reaction>
</comment>
<comment type="cofactor">
    <cofactor evidence="4">
        <name>Mg(2+)</name>
        <dbReference type="ChEBI" id="CHEBI:18420"/>
    </cofactor>
    <text evidence="4">Binds 2 Mg(2+) ions per subunit.</text>
</comment>
<comment type="activity regulation">
    <text evidence="5">The activity of this enzyme could be controlled by adenylation under conditions of abundant glutamine.</text>
</comment>
<comment type="subunit">
    <text evidence="1">Oligomer of 12 subunits arranged in the form of two hexameric ring.</text>
</comment>
<comment type="subcellular location">
    <subcellularLocation>
        <location evidence="4">Cytoplasm</location>
    </subcellularLocation>
</comment>
<comment type="similarity">
    <text evidence="8">Belongs to the glutamine synthetase family.</text>
</comment>
<reference key="1">
    <citation type="journal article" date="1997" name="Nature">
        <title>The complete genome sequence of the gastric pathogen Helicobacter pylori.</title>
        <authorList>
            <person name="Tomb J.-F."/>
            <person name="White O."/>
            <person name="Kerlavage A.R."/>
            <person name="Clayton R.A."/>
            <person name="Sutton G.G."/>
            <person name="Fleischmann R.D."/>
            <person name="Ketchum K.A."/>
            <person name="Klenk H.-P."/>
            <person name="Gill S.R."/>
            <person name="Dougherty B.A."/>
            <person name="Nelson K.E."/>
            <person name="Quackenbush J."/>
            <person name="Zhou L."/>
            <person name="Kirkness E.F."/>
            <person name="Peterson S.N."/>
            <person name="Loftus B.J."/>
            <person name="Richardson D.L."/>
            <person name="Dodson R.J."/>
            <person name="Khalak H.G."/>
            <person name="Glodek A."/>
            <person name="McKenney K."/>
            <person name="FitzGerald L.M."/>
            <person name="Lee N."/>
            <person name="Adams M.D."/>
            <person name="Hickey E.K."/>
            <person name="Berg D.E."/>
            <person name="Gocayne J.D."/>
            <person name="Utterback T.R."/>
            <person name="Peterson J.D."/>
            <person name="Kelley J.M."/>
            <person name="Cotton M.D."/>
            <person name="Weidman J.F."/>
            <person name="Fujii C."/>
            <person name="Bowman C."/>
            <person name="Watthey L."/>
            <person name="Wallin E."/>
            <person name="Hayes W.S."/>
            <person name="Borodovsky M."/>
            <person name="Karp P.D."/>
            <person name="Smith H.O."/>
            <person name="Fraser C.M."/>
            <person name="Venter J.C."/>
        </authorList>
    </citation>
    <scope>NUCLEOTIDE SEQUENCE [LARGE SCALE GENOMIC DNA]</scope>
    <source>
        <strain>ATCC 700392 / 26695</strain>
    </source>
</reference>
<reference key="2">
    <citation type="submission" date="1997-01" db="EMBL/GenBank/DDBJ databases">
        <title>Sequence of the dihydrodipicolinate reductase gene (dapB) from Helicobacter pylori and complementation in Escherichia coli.</title>
        <authorList>
            <person name="Clairoux N."/>
            <person name="Boissinot M."/>
        </authorList>
    </citation>
    <scope>NUCLEOTIDE SEQUENCE [GENOMIC DNA] OF 367-481</scope>
    <source>
        <strain>DSM 4867 / CCUG 17874 / NCTC 11638</strain>
    </source>
</reference>
<evidence type="ECO:0000250" key="1">
    <source>
        <dbReference type="UniProtKB" id="P0A1P6"/>
    </source>
</evidence>
<evidence type="ECO:0000250" key="2">
    <source>
        <dbReference type="UniProtKB" id="P12425"/>
    </source>
</evidence>
<evidence type="ECO:0000250" key="3">
    <source>
        <dbReference type="UniProtKB" id="P77961"/>
    </source>
</evidence>
<evidence type="ECO:0000250" key="4">
    <source>
        <dbReference type="UniProtKB" id="P9WN39"/>
    </source>
</evidence>
<evidence type="ECO:0000250" key="5">
    <source>
        <dbReference type="UniProtKB" id="Q3V5W6"/>
    </source>
</evidence>
<evidence type="ECO:0000255" key="6">
    <source>
        <dbReference type="PROSITE-ProRule" id="PRU01330"/>
    </source>
</evidence>
<evidence type="ECO:0000255" key="7">
    <source>
        <dbReference type="PROSITE-ProRule" id="PRU01331"/>
    </source>
</evidence>
<evidence type="ECO:0000305" key="8"/>
<evidence type="ECO:0007829" key="9">
    <source>
        <dbReference type="PDB" id="5ZLI"/>
    </source>
</evidence>
<evidence type="ECO:0007829" key="10">
    <source>
        <dbReference type="PDB" id="5ZLP"/>
    </source>
</evidence>